<feature type="initiator methionine" description="Removed" evidence="4">
    <location>
        <position position="1"/>
    </location>
</feature>
<feature type="chain" id="PRO_0000293599" description="DNA gyrase subunit B">
    <location>
        <begin position="2"/>
        <end position="675"/>
    </location>
</feature>
<feature type="domain" description="Toprim" evidence="1">
    <location>
        <begin position="453"/>
        <end position="567"/>
    </location>
</feature>
<feature type="binding site" evidence="1">
    <location>
        <position position="459"/>
    </location>
    <ligand>
        <name>Mg(2+)</name>
        <dbReference type="ChEBI" id="CHEBI:18420"/>
        <label>1</label>
        <note>catalytic</note>
    </ligand>
</feature>
<feature type="binding site" evidence="1">
    <location>
        <position position="532"/>
    </location>
    <ligand>
        <name>Mg(2+)</name>
        <dbReference type="ChEBI" id="CHEBI:18420"/>
        <label>1</label>
        <note>catalytic</note>
    </ligand>
</feature>
<feature type="binding site" evidence="1">
    <location>
        <position position="532"/>
    </location>
    <ligand>
        <name>Mg(2+)</name>
        <dbReference type="ChEBI" id="CHEBI:18420"/>
        <label>2</label>
    </ligand>
</feature>
<feature type="binding site" evidence="1">
    <location>
        <position position="534"/>
    </location>
    <ligand>
        <name>Mg(2+)</name>
        <dbReference type="ChEBI" id="CHEBI:18420"/>
        <label>2</label>
    </ligand>
</feature>
<feature type="site" description="Interaction with DNA" evidence="1">
    <location>
        <position position="484"/>
    </location>
</feature>
<feature type="site" description="Interaction with DNA" evidence="1">
    <location>
        <position position="487"/>
    </location>
</feature>
<feature type="sequence conflict" description="In Ref. 1; CAA63917." evidence="5" ref="1">
    <original>L</original>
    <variation>S</variation>
    <location>
        <position position="442"/>
    </location>
</feature>
<feature type="sequence conflict" description="In Ref. 1; CAA63917." evidence="5" ref="1">
    <original>T</original>
    <variation>R</variation>
    <location>
        <position position="507"/>
    </location>
</feature>
<feature type="helix" evidence="6">
    <location>
        <begin position="14"/>
        <end position="16"/>
    </location>
</feature>
<feature type="helix" evidence="6">
    <location>
        <begin position="22"/>
        <end position="28"/>
    </location>
</feature>
<feature type="helix" evidence="6">
    <location>
        <begin position="30"/>
        <end position="34"/>
    </location>
</feature>
<feature type="helix" evidence="6">
    <location>
        <begin position="39"/>
        <end position="58"/>
    </location>
</feature>
<feature type="strand" evidence="6">
    <location>
        <begin position="64"/>
        <end position="69"/>
    </location>
</feature>
<feature type="strand" evidence="6">
    <location>
        <begin position="75"/>
        <end position="79"/>
    </location>
</feature>
<feature type="strand" evidence="6">
    <location>
        <begin position="92"/>
        <end position="94"/>
    </location>
</feature>
<feature type="helix" evidence="6">
    <location>
        <begin position="95"/>
        <end position="101"/>
    </location>
</feature>
<feature type="strand" evidence="6">
    <location>
        <begin position="109"/>
        <end position="113"/>
    </location>
</feature>
<feature type="helix" evidence="6">
    <location>
        <begin position="124"/>
        <end position="130"/>
    </location>
</feature>
<feature type="strand" evidence="6">
    <location>
        <begin position="132"/>
        <end position="141"/>
    </location>
</feature>
<feature type="strand" evidence="6">
    <location>
        <begin position="144"/>
        <end position="151"/>
    </location>
</feature>
<feature type="strand" evidence="6">
    <location>
        <begin position="159"/>
        <end position="163"/>
    </location>
</feature>
<feature type="strand" evidence="6">
    <location>
        <begin position="168"/>
        <end position="175"/>
    </location>
</feature>
<feature type="turn" evidence="6">
    <location>
        <begin position="177"/>
        <end position="179"/>
    </location>
</feature>
<feature type="helix" evidence="6">
    <location>
        <begin position="187"/>
        <end position="200"/>
    </location>
</feature>
<feature type="strand" evidence="6">
    <location>
        <begin position="205"/>
        <end position="210"/>
    </location>
</feature>
<feature type="strand" evidence="6">
    <location>
        <begin position="248"/>
        <end position="251"/>
    </location>
</feature>
<feature type="helix" evidence="6">
    <location>
        <begin position="256"/>
        <end position="264"/>
    </location>
</feature>
<feature type="helix" evidence="6">
    <location>
        <begin position="265"/>
        <end position="267"/>
    </location>
</feature>
<feature type="strand" evidence="6">
    <location>
        <begin position="270"/>
        <end position="273"/>
    </location>
</feature>
<feature type="strand" evidence="6">
    <location>
        <begin position="276"/>
        <end position="282"/>
    </location>
</feature>
<feature type="strand" evidence="6">
    <location>
        <begin position="285"/>
        <end position="297"/>
    </location>
</feature>
<feature type="strand" evidence="6">
    <location>
        <begin position="300"/>
        <end position="305"/>
    </location>
</feature>
<feature type="helix" evidence="6">
    <location>
        <begin position="315"/>
        <end position="334"/>
    </location>
</feature>
<feature type="strand" evidence="6">
    <location>
        <begin position="340"/>
        <end position="342"/>
    </location>
</feature>
<feature type="helix" evidence="6">
    <location>
        <begin position="347"/>
        <end position="351"/>
    </location>
</feature>
<feature type="strand" evidence="6">
    <location>
        <begin position="354"/>
        <end position="364"/>
    </location>
</feature>
<feature type="turn" evidence="6">
    <location>
        <begin position="369"/>
        <end position="372"/>
    </location>
</feature>
<feature type="helix" evidence="6">
    <location>
        <begin position="378"/>
        <end position="398"/>
    </location>
</feature>
<feature type="helix" evidence="6">
    <location>
        <begin position="400"/>
        <end position="422"/>
    </location>
</feature>
<protein>
    <recommendedName>
        <fullName evidence="1">DNA gyrase subunit B</fullName>
        <ecNumber evidence="1">5.6.2.2</ecNumber>
    </recommendedName>
</protein>
<comment type="function">
    <text evidence="1 4">A type II topoisomerase that negatively supercoils closed circular double-stranded (ds) DNA in an ATP-dependent manner (PubMed:8878580) to modulate DNA topology and maintain chromosomes in an underwound state. Negative supercoiling favors strand separation, and DNA replication, transcription, recombination and repair, all of which involve strand separation. Also able to catalyze the interconversion of other topological isomers of dsDNA rings, including catenanes and knotted rings. Type II topoisomerases break and join 2 DNA strands simultaneously in an ATP-dependent manner.</text>
</comment>
<comment type="catalytic activity">
    <reaction evidence="1">
        <text>ATP-dependent breakage, passage and rejoining of double-stranded DNA.</text>
        <dbReference type="EC" id="5.6.2.2"/>
    </reaction>
</comment>
<comment type="cofactor">
    <cofactor evidence="1">
        <name>Mg(2+)</name>
        <dbReference type="ChEBI" id="CHEBI:18420"/>
    </cofactor>
    <cofactor evidence="1">
        <name>Mn(2+)</name>
        <dbReference type="ChEBI" id="CHEBI:29035"/>
    </cofactor>
    <cofactor evidence="1">
        <name>Ca(2+)</name>
        <dbReference type="ChEBI" id="CHEBI:29108"/>
    </cofactor>
    <text evidence="1">Binds two Mg(2+) per subunit. The magnesium ions form salt bridges with both the protein and the DNA. Can also accept other divalent metal cations, such as Mn(2+) or Ca(2+).</text>
</comment>
<comment type="activity regulation">
    <text evidence="2 3 4">Inhibited by 4-quinoline drugs (nalidixic acid, ciprofloxacin, ofloxacin), although it is much less sensitive than the corresponding enzyme from E.coli (PubMed:8878580). GyrB intrinsic ATPase activity inhibited by aminopyrazinamide and pyrrolamide derivatives (PubMed:23268609, PubMed:24126580).</text>
</comment>
<comment type="subunit">
    <text evidence="1 4">Heterotetramer, composed of two GyrA and two GyrB chains (PubMed:8878580). In the heterotetramer, GyrA contains the active site tyrosine that forms a transient covalent intermediate with DNA, while GyrB binds cofactors and catalyzes ATP hydrolysis.</text>
</comment>
<comment type="subcellular location">
    <subcellularLocation>
        <location evidence="1">Cytoplasm</location>
    </subcellularLocation>
</comment>
<comment type="miscellaneous">
    <text evidence="1">Few gyrases are as efficient as E.coli at forming negative supercoils. Not all organisms have 2 type II topoisomerases; in organisms with a single type II topoisomerase this enzyme also has to decatenate newly replicated chromosomes.</text>
</comment>
<comment type="similarity">
    <text evidence="1">Belongs to the type II topoisomerase GyrB family.</text>
</comment>
<keyword id="KW-0002">3D-structure</keyword>
<keyword id="KW-0067">ATP-binding</keyword>
<keyword id="KW-0963">Cytoplasm</keyword>
<keyword id="KW-0903">Direct protein sequencing</keyword>
<keyword id="KW-0238">DNA-binding</keyword>
<keyword id="KW-0413">Isomerase</keyword>
<keyword id="KW-0460">Magnesium</keyword>
<keyword id="KW-0479">Metal-binding</keyword>
<keyword id="KW-0547">Nucleotide-binding</keyword>
<keyword id="KW-1185">Reference proteome</keyword>
<keyword id="KW-0799">Topoisomerase</keyword>
<sequence>MAAQKNNAPKEYGADSITILEGLEAVRKRPGMYIGSTGERGLHHLIWEVVDNAVDEAMAGFATRVDVKIHADGSVEVRDDGRGIPVEMHATGMPTIDVVMTQLHAGGKFDGETYAVSGGLHGVGVSVVNALSTRLEATVLRDGYEWFQYYDRSVPGKLKQGGETKETGTTIRFWADPEIFETTDYNFETVARRLQEMAFLNKGLTIELTDERVTAEEVVDDVVKDTAEAPKTADEKAAEATGPSKVKHRVFHYPGGLVDYVKHINRTKTPIQQSIIDFDGKGPGHEVEIAMQWNAGYSESVHTFANTINTHEGGTHEEGFRAALTSVVNRYAKDKKLLKDKDPNLTGDDIREGLAAVISVKVAEPQFEGQTKTKLGNTEVKSFVQKICNEQLQHWFEANPAEAKTVVNKAVSSAQARIAARKARELVRRKSATDIGGLPGKLADCRSTDPSKSELYVVEGDSAGGSAKSGRDSMFQAILPLRGKIINVEKARIDRVLKNTEVQSIITALGTGIHDEFDISKLRYHKIVLMADADVDGQHISTLLLTLLFRFMKPLVENGHIFLAQPPLYKLKWQRSEPEFAYSDRERDGLLEAGRAAGKKINVDDGIQRYKGLGEMDAKELWETTMDPSVRVLRQVTLDDAAAADELFSILMGEDVEARRSFITRNAKDVRFLDV</sequence>
<reference key="1">
    <citation type="journal article" date="1996" name="Antimicrob. Agents Chemother.">
        <title>Sequence analysis, purification, and study of inhibition by 4-quinolones of the DNA gyrase from Mycobacterium smegmatis.</title>
        <authorList>
            <person name="Revel-Viravau V."/>
            <person name="Truong Q.C."/>
            <person name="Moreau N."/>
            <person name="Jarlier V."/>
            <person name="Sougakoff W."/>
        </authorList>
    </citation>
    <scope>NUCLEOTIDE SEQUENCE [GENOMIC DNA]</scope>
    <scope>PROTEIN SEQUENCE OF 2-12</scope>
    <scope>FUNCTION</scope>
    <scope>SUBUNIT</scope>
    <scope>ACTIVITY REGULATION</scope>
    <source>
        <strain>ATCC 700084 / mc(2)155</strain>
    </source>
</reference>
<reference key="2">
    <citation type="submission" date="2006-10" db="EMBL/GenBank/DDBJ databases">
        <authorList>
            <person name="Fleischmann R.D."/>
            <person name="Dodson R.J."/>
            <person name="Haft D.H."/>
            <person name="Merkel J.S."/>
            <person name="Nelson W.C."/>
            <person name="Fraser C.M."/>
        </authorList>
    </citation>
    <scope>NUCLEOTIDE SEQUENCE [LARGE SCALE GENOMIC DNA]</scope>
    <source>
        <strain>ATCC 700084 / mc(2)155</strain>
    </source>
</reference>
<reference key="3">
    <citation type="journal article" date="2007" name="Genome Biol.">
        <title>Interrupted coding sequences in Mycobacterium smegmatis: authentic mutations or sequencing errors?</title>
        <authorList>
            <person name="Deshayes C."/>
            <person name="Perrodou E."/>
            <person name="Gallien S."/>
            <person name="Euphrasie D."/>
            <person name="Schaeffer C."/>
            <person name="Van-Dorsselaer A."/>
            <person name="Poch O."/>
            <person name="Lecompte O."/>
            <person name="Reyrat J.-M."/>
        </authorList>
    </citation>
    <scope>NUCLEOTIDE SEQUENCE [LARGE SCALE GENOMIC DNA]</scope>
    <source>
        <strain>ATCC 700084 / mc(2)155</strain>
    </source>
</reference>
<reference key="4">
    <citation type="journal article" date="2009" name="Genome Res.">
        <title>Ortho-proteogenomics: multiple proteomes investigation through orthology and a new MS-based protocol.</title>
        <authorList>
            <person name="Gallien S."/>
            <person name="Perrodou E."/>
            <person name="Carapito C."/>
            <person name="Deshayes C."/>
            <person name="Reyrat J.-M."/>
            <person name="Van Dorsselaer A."/>
            <person name="Poch O."/>
            <person name="Schaeffer C."/>
            <person name="Lecompte O."/>
        </authorList>
    </citation>
    <scope>NUCLEOTIDE SEQUENCE [LARGE SCALE GENOMIC DNA]</scope>
    <source>
        <strain>ATCC 700084 / mc(2)155</strain>
    </source>
</reference>
<reference key="5">
    <citation type="journal article" date="2013" name="ACS Chem. Biol.">
        <title>Aminopyrazinamides: novel and specific GyrB inhibitors that kill replicating and nonreplicating Mycobacterium tuberculosis.</title>
        <authorList>
            <person name="Shirude P.S."/>
            <person name="Madhavapeddi P."/>
            <person name="Tucker J.A."/>
            <person name="Murugan K."/>
            <person name="Patil V."/>
            <person name="Basavarajappa H."/>
            <person name="Raichurkar A.V."/>
            <person name="Humnabadkar V."/>
            <person name="Hussein S."/>
            <person name="Sharma S."/>
            <person name="Ramya V.K."/>
            <person name="Narayan C.B."/>
            <person name="Balganesh T.S."/>
            <person name="Sambandamurthy V.K."/>
        </authorList>
    </citation>
    <scope>X-RAY CRYSTALLOGRAPHY (2.20 ANGSTROMS) OF 9-255 IN COMPLEX WITH AMINOPYRAZINAMIDE</scope>
    <scope>ACTIVITY REGULATION</scope>
</reference>
<reference key="6">
    <citation type="journal article" date="2014" name="Antimicrob. Agents Chemother.">
        <title>Optimization of pyrrolamides as mycobacterial GyrB ATPase inhibitors: structure-activity relationship and in vivo efficacy in a mouse model of tuberculosis.</title>
        <authorList>
            <person name="P S.H."/>
            <person name="Solapure S."/>
            <person name="Mukherjee K."/>
            <person name="Nandi V."/>
            <person name="Waterson D."/>
            <person name="Shandil R."/>
            <person name="Balganesh M."/>
            <person name="Sambandamurthy V.K."/>
            <person name="Raichurkar A.K."/>
            <person name="Deshpande A."/>
            <person name="Ghosh A."/>
            <person name="Awasthy D."/>
            <person name="Shanbhag G."/>
            <person name="Sheikh G."/>
            <person name="McMiken H."/>
            <person name="Puttur J."/>
            <person name="Reddy J."/>
            <person name="Werngren J."/>
            <person name="Read J."/>
            <person name="Kumar M."/>
            <person name="R M."/>
            <person name="Chinnapattu M."/>
            <person name="Madhavapeddi P."/>
            <person name="Manjrekar P."/>
            <person name="Basu R."/>
            <person name="Gaonkar S."/>
            <person name="Sharma S."/>
            <person name="Hoffner S."/>
            <person name="Humnabadkar V."/>
            <person name="Subbulakshmi V."/>
            <person name="Panduga V."/>
        </authorList>
    </citation>
    <scope>X-RAY CRYSTALLOGRAPHY (2.35 ANGSTROMS) OF 19-212 AND 247-255 IN COMPLEX WITH PYRROLAMIDE</scope>
    <scope>ACTIVITY REGULATION</scope>
</reference>
<organism>
    <name type="scientific">Mycolicibacterium smegmatis (strain ATCC 700084 / mc(2)155)</name>
    <name type="common">Mycobacterium smegmatis</name>
    <dbReference type="NCBI Taxonomy" id="246196"/>
    <lineage>
        <taxon>Bacteria</taxon>
        <taxon>Bacillati</taxon>
        <taxon>Actinomycetota</taxon>
        <taxon>Actinomycetes</taxon>
        <taxon>Mycobacteriales</taxon>
        <taxon>Mycobacteriaceae</taxon>
        <taxon>Mycolicibacterium</taxon>
    </lineage>
</organism>
<evidence type="ECO:0000255" key="1">
    <source>
        <dbReference type="HAMAP-Rule" id="MF_01898"/>
    </source>
</evidence>
<evidence type="ECO:0000269" key="2">
    <source>
    </source>
</evidence>
<evidence type="ECO:0000269" key="3">
    <source>
    </source>
</evidence>
<evidence type="ECO:0000269" key="4">
    <source>
    </source>
</evidence>
<evidence type="ECO:0000305" key="5"/>
<evidence type="ECO:0007829" key="6">
    <source>
        <dbReference type="PDB" id="6ZT3"/>
    </source>
</evidence>
<name>GYRB_MYCS2</name>
<dbReference type="EC" id="5.6.2.2" evidence="1"/>
<dbReference type="EMBL" id="X94224">
    <property type="protein sequence ID" value="CAA63917.1"/>
    <property type="molecule type" value="Genomic_DNA"/>
</dbReference>
<dbReference type="EMBL" id="CP000480">
    <property type="protein sequence ID" value="ABK72750.1"/>
    <property type="molecule type" value="Genomic_DNA"/>
</dbReference>
<dbReference type="EMBL" id="CP001663">
    <property type="protein sequence ID" value="AFP36492.1"/>
    <property type="molecule type" value="Genomic_DNA"/>
</dbReference>
<dbReference type="RefSeq" id="WP_003891333.1">
    <property type="nucleotide sequence ID" value="NZ_SIJM01000001.1"/>
</dbReference>
<dbReference type="RefSeq" id="YP_884428.1">
    <property type="nucleotide sequence ID" value="NC_008596.1"/>
</dbReference>
<dbReference type="PDB" id="4B6C">
    <property type="method" value="X-ray"/>
    <property type="resolution" value="2.20 A"/>
    <property type="chains" value="A/B=9-255"/>
</dbReference>
<dbReference type="PDB" id="4BAE">
    <property type="method" value="X-ray"/>
    <property type="resolution" value="2.35 A"/>
    <property type="chains" value="A/B/C/D=19-212, A/B/C/D=247-255"/>
</dbReference>
<dbReference type="PDB" id="6ZT3">
    <property type="method" value="X-ray"/>
    <property type="resolution" value="1.56 A"/>
    <property type="chains" value="A=1-427"/>
</dbReference>
<dbReference type="PDB" id="6ZT5">
    <property type="method" value="X-ray"/>
    <property type="resolution" value="2.20 A"/>
    <property type="chains" value="C=1-427"/>
</dbReference>
<dbReference type="PDBsum" id="4B6C"/>
<dbReference type="PDBsum" id="4BAE"/>
<dbReference type="PDBsum" id="6ZT3"/>
<dbReference type="PDBsum" id="6ZT5"/>
<dbReference type="SMR" id="A0QNE0"/>
<dbReference type="STRING" id="246196.MSMEG_0005"/>
<dbReference type="ChEMBL" id="CHEMBL6059"/>
<dbReference type="DrugCentral" id="A0QNE0"/>
<dbReference type="PaxDb" id="246196-MSMEI_0007"/>
<dbReference type="GeneID" id="93454932"/>
<dbReference type="KEGG" id="msb:LJ00_00025"/>
<dbReference type="KEGG" id="msg:MSMEI_0007"/>
<dbReference type="KEGG" id="msm:MSMEG_0005"/>
<dbReference type="PATRIC" id="fig|246196.19.peg.5"/>
<dbReference type="eggNOG" id="COG0187">
    <property type="taxonomic scope" value="Bacteria"/>
</dbReference>
<dbReference type="OrthoDB" id="9802808at2"/>
<dbReference type="Proteomes" id="UP000000757">
    <property type="component" value="Chromosome"/>
</dbReference>
<dbReference type="Proteomes" id="UP000006158">
    <property type="component" value="Chromosome"/>
</dbReference>
<dbReference type="GO" id="GO:0005694">
    <property type="term" value="C:chromosome"/>
    <property type="evidence" value="ECO:0007669"/>
    <property type="project" value="InterPro"/>
</dbReference>
<dbReference type="GO" id="GO:0005737">
    <property type="term" value="C:cytoplasm"/>
    <property type="evidence" value="ECO:0007669"/>
    <property type="project" value="UniProtKB-SubCell"/>
</dbReference>
<dbReference type="GO" id="GO:0005524">
    <property type="term" value="F:ATP binding"/>
    <property type="evidence" value="ECO:0007669"/>
    <property type="project" value="UniProtKB-UniRule"/>
</dbReference>
<dbReference type="GO" id="GO:0003677">
    <property type="term" value="F:DNA binding"/>
    <property type="evidence" value="ECO:0007669"/>
    <property type="project" value="UniProtKB-KW"/>
</dbReference>
<dbReference type="GO" id="GO:0034335">
    <property type="term" value="F:DNA negative supercoiling activity"/>
    <property type="evidence" value="ECO:0000314"/>
    <property type="project" value="UniProtKB"/>
</dbReference>
<dbReference type="GO" id="GO:0046872">
    <property type="term" value="F:metal ion binding"/>
    <property type="evidence" value="ECO:0007669"/>
    <property type="project" value="UniProtKB-KW"/>
</dbReference>
<dbReference type="GO" id="GO:0006265">
    <property type="term" value="P:DNA topological change"/>
    <property type="evidence" value="ECO:0007669"/>
    <property type="project" value="UniProtKB-UniRule"/>
</dbReference>
<dbReference type="GO" id="GO:0006261">
    <property type="term" value="P:DNA-templated DNA replication"/>
    <property type="evidence" value="ECO:0007669"/>
    <property type="project" value="UniProtKB-UniRule"/>
</dbReference>
<dbReference type="CDD" id="cd16928">
    <property type="entry name" value="HATPase_GyrB-like"/>
    <property type="match status" value="1"/>
</dbReference>
<dbReference type="CDD" id="cd00822">
    <property type="entry name" value="TopoII_Trans_DNA_gyrase"/>
    <property type="match status" value="1"/>
</dbReference>
<dbReference type="FunFam" id="3.30.230.10:FF:000005">
    <property type="entry name" value="DNA gyrase subunit B"/>
    <property type="match status" value="1"/>
</dbReference>
<dbReference type="FunFam" id="3.30.565.10:FF:000002">
    <property type="entry name" value="DNA gyrase subunit B"/>
    <property type="match status" value="1"/>
</dbReference>
<dbReference type="FunFam" id="3.40.50.670:FF:000002">
    <property type="entry name" value="DNA gyrase subunit B"/>
    <property type="match status" value="1"/>
</dbReference>
<dbReference type="Gene3D" id="3.30.230.10">
    <property type="match status" value="1"/>
</dbReference>
<dbReference type="Gene3D" id="3.40.50.670">
    <property type="match status" value="1"/>
</dbReference>
<dbReference type="Gene3D" id="3.30.565.10">
    <property type="entry name" value="Histidine kinase-like ATPase, C-terminal domain"/>
    <property type="match status" value="1"/>
</dbReference>
<dbReference type="HAMAP" id="MF_01898">
    <property type="entry name" value="GyrB"/>
    <property type="match status" value="1"/>
</dbReference>
<dbReference type="InterPro" id="IPR002288">
    <property type="entry name" value="DNA_gyrase_B_C"/>
</dbReference>
<dbReference type="InterPro" id="IPR011557">
    <property type="entry name" value="GyrB"/>
</dbReference>
<dbReference type="InterPro" id="IPR036890">
    <property type="entry name" value="HATPase_C_sf"/>
</dbReference>
<dbReference type="InterPro" id="IPR020568">
    <property type="entry name" value="Ribosomal_Su5_D2-typ_SF"/>
</dbReference>
<dbReference type="InterPro" id="IPR014721">
    <property type="entry name" value="Ribsml_uS5_D2-typ_fold_subgr"/>
</dbReference>
<dbReference type="InterPro" id="IPR001241">
    <property type="entry name" value="Topo_IIA"/>
</dbReference>
<dbReference type="InterPro" id="IPR013760">
    <property type="entry name" value="Topo_IIA-like_dom_sf"/>
</dbReference>
<dbReference type="InterPro" id="IPR000565">
    <property type="entry name" value="Topo_IIA_B"/>
</dbReference>
<dbReference type="InterPro" id="IPR013759">
    <property type="entry name" value="Topo_IIA_B_C"/>
</dbReference>
<dbReference type="InterPro" id="IPR013506">
    <property type="entry name" value="Topo_IIA_bsu_dom2"/>
</dbReference>
<dbReference type="InterPro" id="IPR018522">
    <property type="entry name" value="TopoIIA_CS"/>
</dbReference>
<dbReference type="InterPro" id="IPR006171">
    <property type="entry name" value="TOPRIM_dom"/>
</dbReference>
<dbReference type="NCBIfam" id="TIGR01059">
    <property type="entry name" value="gyrB"/>
    <property type="match status" value="1"/>
</dbReference>
<dbReference type="NCBIfam" id="NF004189">
    <property type="entry name" value="PRK05644.1"/>
    <property type="match status" value="1"/>
</dbReference>
<dbReference type="PANTHER" id="PTHR45866:SF1">
    <property type="entry name" value="DNA GYRASE SUBUNIT B, MITOCHONDRIAL"/>
    <property type="match status" value="1"/>
</dbReference>
<dbReference type="PANTHER" id="PTHR45866">
    <property type="entry name" value="DNA GYRASE/TOPOISOMERASE SUBUNIT B"/>
    <property type="match status" value="1"/>
</dbReference>
<dbReference type="Pfam" id="PF00204">
    <property type="entry name" value="DNA_gyraseB"/>
    <property type="match status" value="1"/>
</dbReference>
<dbReference type="Pfam" id="PF00986">
    <property type="entry name" value="DNA_gyraseB_C"/>
    <property type="match status" value="1"/>
</dbReference>
<dbReference type="Pfam" id="PF02518">
    <property type="entry name" value="HATPase_c"/>
    <property type="match status" value="1"/>
</dbReference>
<dbReference type="Pfam" id="PF01751">
    <property type="entry name" value="Toprim"/>
    <property type="match status" value="1"/>
</dbReference>
<dbReference type="PRINTS" id="PR01159">
    <property type="entry name" value="DNAGYRASEB"/>
</dbReference>
<dbReference type="PRINTS" id="PR00418">
    <property type="entry name" value="TPI2FAMILY"/>
</dbReference>
<dbReference type="SMART" id="SM00387">
    <property type="entry name" value="HATPase_c"/>
    <property type="match status" value="1"/>
</dbReference>
<dbReference type="SMART" id="SM00433">
    <property type="entry name" value="TOP2c"/>
    <property type="match status" value="1"/>
</dbReference>
<dbReference type="SUPFAM" id="SSF55874">
    <property type="entry name" value="ATPase domain of HSP90 chaperone/DNA topoisomerase II/histidine kinase"/>
    <property type="match status" value="1"/>
</dbReference>
<dbReference type="SUPFAM" id="SSF54211">
    <property type="entry name" value="Ribosomal protein S5 domain 2-like"/>
    <property type="match status" value="1"/>
</dbReference>
<dbReference type="SUPFAM" id="SSF56719">
    <property type="entry name" value="Type II DNA topoisomerase"/>
    <property type="match status" value="1"/>
</dbReference>
<dbReference type="PROSITE" id="PS00177">
    <property type="entry name" value="TOPOISOMERASE_II"/>
    <property type="match status" value="1"/>
</dbReference>
<dbReference type="PROSITE" id="PS50880">
    <property type="entry name" value="TOPRIM"/>
    <property type="match status" value="1"/>
</dbReference>
<proteinExistence type="evidence at protein level"/>
<gene>
    <name evidence="1" type="primary">gyrB</name>
    <name type="ordered locus">MSMEG_0005</name>
    <name type="ordered locus">MSMEI_0007</name>
</gene>
<accession>A0QNE0</accession>
<accession>I7FVC1</accession>
<accession>P48355</accession>
<accession>Q59555</accession>